<evidence type="ECO:0000255" key="1">
    <source>
        <dbReference type="HAMAP-Rule" id="MF_01346"/>
    </source>
</evidence>
<protein>
    <recommendedName>
        <fullName evidence="1">ATP synthase subunit alpha, chloroplastic</fullName>
        <ecNumber evidence="1">7.1.2.2</ecNumber>
    </recommendedName>
    <alternativeName>
        <fullName evidence="1">ATP synthase F1 sector subunit alpha</fullName>
    </alternativeName>
    <alternativeName>
        <fullName evidence="1">F-ATPase subunit alpha</fullName>
    </alternativeName>
</protein>
<reference key="1">
    <citation type="journal article" date="2006" name="Mol. Biol. Evol.">
        <title>The complete chloroplast genome sequence of Pelargonium x hortorum: organization and evolution of the largest and most highly rearranged chloroplast genome of land plants.</title>
        <authorList>
            <person name="Chumley T.W."/>
            <person name="Palmer J.D."/>
            <person name="Mower J.P."/>
            <person name="Fourcade H.M."/>
            <person name="Calie P.J."/>
            <person name="Boore J.L."/>
            <person name="Jansen R.K."/>
        </authorList>
    </citation>
    <scope>NUCLEOTIDE SEQUENCE [LARGE SCALE GENOMIC DNA]</scope>
    <source>
        <strain>cv. Ringo White</strain>
    </source>
</reference>
<proteinExistence type="inferred from homology"/>
<comment type="function">
    <text evidence="1">Produces ATP from ADP in the presence of a proton gradient across the membrane. The alpha chain is a regulatory subunit.</text>
</comment>
<comment type="catalytic activity">
    <reaction evidence="1">
        <text>ATP + H2O + 4 H(+)(in) = ADP + phosphate + 5 H(+)(out)</text>
        <dbReference type="Rhea" id="RHEA:57720"/>
        <dbReference type="ChEBI" id="CHEBI:15377"/>
        <dbReference type="ChEBI" id="CHEBI:15378"/>
        <dbReference type="ChEBI" id="CHEBI:30616"/>
        <dbReference type="ChEBI" id="CHEBI:43474"/>
        <dbReference type="ChEBI" id="CHEBI:456216"/>
        <dbReference type="EC" id="7.1.2.2"/>
    </reaction>
</comment>
<comment type="subunit">
    <text evidence="1">F-type ATPases have 2 components, CF(1) - the catalytic core - and CF(0) - the membrane proton channel. CF(1) has five subunits: alpha(3), beta(3), gamma(1), delta(1), epsilon(1). CF(0) has four main subunits: a, b, b' and c.</text>
</comment>
<comment type="subcellular location">
    <subcellularLocation>
        <location evidence="1">Plastid</location>
        <location evidence="1">Chloroplast thylakoid membrane</location>
        <topology evidence="1">Peripheral membrane protein</topology>
    </subcellularLocation>
</comment>
<comment type="similarity">
    <text evidence="1">Belongs to the ATPase alpha/beta chains family.</text>
</comment>
<name>ATPA_PELHO</name>
<sequence>MVPIRADEIRNLIRERIEQYNREVKIVNTGTVLQVGDGIARIYGLNEVMAGELVEFEEGTIGIALNLESNNVGVVLMGAGLMIQEGSSVKATGRIVQIPVSEAYLGRVINALAKPIDGRGGISASESRLIESPAPGIISRRSVYEPLQTGLIAIDSMIPIGRGQRELIIGDRQTGKTAVATDTILNQQGKNVICVYVAIGQKASSVAQVVTTFQEKGAMEYTIVVAETAASPATLQYLAPYTGAALAEFFMYRERHTLIIYDDLSKQAQAYRQMSLLLRRPPGREAYPGDVFYLHSRLLERAAKSSSSLGEGSMTALPIVETQSGDVSAYIPTNVISITDGQIFLSADLFNSGIRPAINVGISVSRVGSAAQIKAMKQVAGKSKLDLAQFTELEAFAQFATDLDKTTQSQLARGRRLRELLKQSQADPLAVEEQIMTVYTGINGYLDSLEIGQVRKFLEDLRKYLKGNKPKFQEIISSTKTFTEEAEALLKEAIQEQTELFILKEQG</sequence>
<geneLocation type="chloroplast"/>
<organism>
    <name type="scientific">Pelargonium hortorum</name>
    <name type="common">Common geranium</name>
    <name type="synonym">Pelargonium inquinans x Pelargonium zonale</name>
    <dbReference type="NCBI Taxonomy" id="4031"/>
    <lineage>
        <taxon>Eukaryota</taxon>
        <taxon>Viridiplantae</taxon>
        <taxon>Streptophyta</taxon>
        <taxon>Embryophyta</taxon>
        <taxon>Tracheophyta</taxon>
        <taxon>Spermatophyta</taxon>
        <taxon>Magnoliopsida</taxon>
        <taxon>eudicotyledons</taxon>
        <taxon>Gunneridae</taxon>
        <taxon>Pentapetalae</taxon>
        <taxon>rosids</taxon>
        <taxon>malvids</taxon>
        <taxon>Geraniales</taxon>
        <taxon>Geraniaceae</taxon>
        <taxon>Pelargonium</taxon>
    </lineage>
</organism>
<keyword id="KW-0066">ATP synthesis</keyword>
<keyword id="KW-0067">ATP-binding</keyword>
<keyword id="KW-0139">CF(1)</keyword>
<keyword id="KW-0150">Chloroplast</keyword>
<keyword id="KW-0375">Hydrogen ion transport</keyword>
<keyword id="KW-0406">Ion transport</keyword>
<keyword id="KW-0472">Membrane</keyword>
<keyword id="KW-0547">Nucleotide-binding</keyword>
<keyword id="KW-0934">Plastid</keyword>
<keyword id="KW-0793">Thylakoid</keyword>
<keyword id="KW-1278">Translocase</keyword>
<keyword id="KW-0813">Transport</keyword>
<feature type="chain" id="PRO_0000275171" description="ATP synthase subunit alpha, chloroplastic">
    <location>
        <begin position="1"/>
        <end position="507"/>
    </location>
</feature>
<feature type="binding site" evidence="1">
    <location>
        <begin position="170"/>
        <end position="177"/>
    </location>
    <ligand>
        <name>ATP</name>
        <dbReference type="ChEBI" id="CHEBI:30616"/>
    </ligand>
</feature>
<feature type="site" description="Required for activity" evidence="1">
    <location>
        <position position="363"/>
    </location>
</feature>
<gene>
    <name evidence="1" type="primary">atpA</name>
</gene>
<dbReference type="EC" id="7.1.2.2" evidence="1"/>
<dbReference type="EMBL" id="DQ897681">
    <property type="protein sequence ID" value="ABI17246.1"/>
    <property type="molecule type" value="Genomic_DNA"/>
</dbReference>
<dbReference type="RefSeq" id="YP_784055.1">
    <property type="nucleotide sequence ID" value="NC_008454.1"/>
</dbReference>
<dbReference type="SMR" id="Q06FX6"/>
<dbReference type="GeneID" id="4362765"/>
<dbReference type="GO" id="GO:0009535">
    <property type="term" value="C:chloroplast thylakoid membrane"/>
    <property type="evidence" value="ECO:0007669"/>
    <property type="project" value="UniProtKB-SubCell"/>
</dbReference>
<dbReference type="GO" id="GO:0045259">
    <property type="term" value="C:proton-transporting ATP synthase complex"/>
    <property type="evidence" value="ECO:0007669"/>
    <property type="project" value="UniProtKB-KW"/>
</dbReference>
<dbReference type="GO" id="GO:0043531">
    <property type="term" value="F:ADP binding"/>
    <property type="evidence" value="ECO:0007669"/>
    <property type="project" value="TreeGrafter"/>
</dbReference>
<dbReference type="GO" id="GO:0005524">
    <property type="term" value="F:ATP binding"/>
    <property type="evidence" value="ECO:0007669"/>
    <property type="project" value="UniProtKB-UniRule"/>
</dbReference>
<dbReference type="GO" id="GO:0046933">
    <property type="term" value="F:proton-transporting ATP synthase activity, rotational mechanism"/>
    <property type="evidence" value="ECO:0007669"/>
    <property type="project" value="UniProtKB-UniRule"/>
</dbReference>
<dbReference type="CDD" id="cd18113">
    <property type="entry name" value="ATP-synt_F1_alpha_C"/>
    <property type="match status" value="1"/>
</dbReference>
<dbReference type="CDD" id="cd18116">
    <property type="entry name" value="ATP-synt_F1_alpha_N"/>
    <property type="match status" value="1"/>
</dbReference>
<dbReference type="CDD" id="cd01132">
    <property type="entry name" value="F1-ATPase_alpha_CD"/>
    <property type="match status" value="1"/>
</dbReference>
<dbReference type="FunFam" id="1.20.150.20:FF:000001">
    <property type="entry name" value="ATP synthase subunit alpha"/>
    <property type="match status" value="1"/>
</dbReference>
<dbReference type="FunFam" id="2.40.30.20:FF:000001">
    <property type="entry name" value="ATP synthase subunit alpha"/>
    <property type="match status" value="1"/>
</dbReference>
<dbReference type="FunFam" id="3.40.50.300:FF:000002">
    <property type="entry name" value="ATP synthase subunit alpha"/>
    <property type="match status" value="1"/>
</dbReference>
<dbReference type="Gene3D" id="2.40.30.20">
    <property type="match status" value="1"/>
</dbReference>
<dbReference type="Gene3D" id="1.20.150.20">
    <property type="entry name" value="ATP synthase alpha/beta chain, C-terminal domain"/>
    <property type="match status" value="1"/>
</dbReference>
<dbReference type="Gene3D" id="3.40.50.300">
    <property type="entry name" value="P-loop containing nucleotide triphosphate hydrolases"/>
    <property type="match status" value="1"/>
</dbReference>
<dbReference type="HAMAP" id="MF_01346">
    <property type="entry name" value="ATP_synth_alpha_bact"/>
    <property type="match status" value="1"/>
</dbReference>
<dbReference type="InterPro" id="IPR023366">
    <property type="entry name" value="ATP_synth_asu-like_sf"/>
</dbReference>
<dbReference type="InterPro" id="IPR000793">
    <property type="entry name" value="ATP_synth_asu_C"/>
</dbReference>
<dbReference type="InterPro" id="IPR038376">
    <property type="entry name" value="ATP_synth_asu_C_sf"/>
</dbReference>
<dbReference type="InterPro" id="IPR033732">
    <property type="entry name" value="ATP_synth_F1_a_nt-bd_dom"/>
</dbReference>
<dbReference type="InterPro" id="IPR005294">
    <property type="entry name" value="ATP_synth_F1_asu"/>
</dbReference>
<dbReference type="InterPro" id="IPR020003">
    <property type="entry name" value="ATPase_a/bsu_AS"/>
</dbReference>
<dbReference type="InterPro" id="IPR004100">
    <property type="entry name" value="ATPase_F1/V1/A1_a/bsu_N"/>
</dbReference>
<dbReference type="InterPro" id="IPR036121">
    <property type="entry name" value="ATPase_F1/V1/A1_a/bsu_N_sf"/>
</dbReference>
<dbReference type="InterPro" id="IPR000194">
    <property type="entry name" value="ATPase_F1/V1/A1_a/bsu_nucl-bd"/>
</dbReference>
<dbReference type="InterPro" id="IPR027417">
    <property type="entry name" value="P-loop_NTPase"/>
</dbReference>
<dbReference type="NCBIfam" id="TIGR00962">
    <property type="entry name" value="atpA"/>
    <property type="match status" value="1"/>
</dbReference>
<dbReference type="NCBIfam" id="NF009884">
    <property type="entry name" value="PRK13343.1"/>
    <property type="match status" value="1"/>
</dbReference>
<dbReference type="PANTHER" id="PTHR48082">
    <property type="entry name" value="ATP SYNTHASE SUBUNIT ALPHA, MITOCHONDRIAL"/>
    <property type="match status" value="1"/>
</dbReference>
<dbReference type="PANTHER" id="PTHR48082:SF2">
    <property type="entry name" value="ATP SYNTHASE SUBUNIT ALPHA, MITOCHONDRIAL"/>
    <property type="match status" value="1"/>
</dbReference>
<dbReference type="Pfam" id="PF00006">
    <property type="entry name" value="ATP-synt_ab"/>
    <property type="match status" value="1"/>
</dbReference>
<dbReference type="Pfam" id="PF00306">
    <property type="entry name" value="ATP-synt_ab_C"/>
    <property type="match status" value="1"/>
</dbReference>
<dbReference type="Pfam" id="PF02874">
    <property type="entry name" value="ATP-synt_ab_N"/>
    <property type="match status" value="1"/>
</dbReference>
<dbReference type="PIRSF" id="PIRSF039088">
    <property type="entry name" value="F_ATPase_subunit_alpha"/>
    <property type="match status" value="1"/>
</dbReference>
<dbReference type="SUPFAM" id="SSF47917">
    <property type="entry name" value="C-terminal domain of alpha and beta subunits of F1 ATP synthase"/>
    <property type="match status" value="1"/>
</dbReference>
<dbReference type="SUPFAM" id="SSF50615">
    <property type="entry name" value="N-terminal domain of alpha and beta subunits of F1 ATP synthase"/>
    <property type="match status" value="1"/>
</dbReference>
<dbReference type="SUPFAM" id="SSF52540">
    <property type="entry name" value="P-loop containing nucleoside triphosphate hydrolases"/>
    <property type="match status" value="1"/>
</dbReference>
<dbReference type="PROSITE" id="PS00152">
    <property type="entry name" value="ATPASE_ALPHA_BETA"/>
    <property type="match status" value="1"/>
</dbReference>
<accession>Q06FX6</accession>